<organism>
    <name type="scientific">Pelagibacter ubique (strain HTCC1062)</name>
    <dbReference type="NCBI Taxonomy" id="335992"/>
    <lineage>
        <taxon>Bacteria</taxon>
        <taxon>Pseudomonadati</taxon>
        <taxon>Pseudomonadota</taxon>
        <taxon>Alphaproteobacteria</taxon>
        <taxon>Candidatus Pelagibacterales</taxon>
        <taxon>Candidatus Pelagibacteraceae</taxon>
        <taxon>Candidatus Pelagibacter</taxon>
    </lineage>
</organism>
<feature type="chain" id="PRO_0000135810" description="Histidinol dehydrogenase homolog">
    <location>
        <begin position="1"/>
        <end position="428"/>
    </location>
</feature>
<feature type="active site" description="Proton acceptor" evidence="1">
    <location>
        <position position="320"/>
    </location>
</feature>
<feature type="active site" description="Proton acceptor" evidence="1">
    <location>
        <position position="321"/>
    </location>
</feature>
<feature type="binding site" evidence="1">
    <location>
        <position position="250"/>
    </location>
    <ligand>
        <name>Zn(2+)</name>
        <dbReference type="ChEBI" id="CHEBI:29105"/>
    </ligand>
</feature>
<feature type="binding site" evidence="1">
    <location>
        <position position="253"/>
    </location>
    <ligand>
        <name>Zn(2+)</name>
        <dbReference type="ChEBI" id="CHEBI:29105"/>
    </ligand>
</feature>
<feature type="binding site" evidence="1">
    <location>
        <position position="354"/>
    </location>
    <ligand>
        <name>Zn(2+)</name>
        <dbReference type="ChEBI" id="CHEBI:29105"/>
    </ligand>
</feature>
<feature type="binding site" evidence="1">
    <location>
        <position position="413"/>
    </location>
    <ligand>
        <name>Zn(2+)</name>
        <dbReference type="ChEBI" id="CHEBI:29105"/>
    </ligand>
</feature>
<sequence length="428" mass="46658">MAITYLKKSPKTSSTDDTKTTGIVQDLLKNIETTKEQGCIDLTKKFDKYDGEIIVSKERIEEIKKTLDQKTKDDVQFSYERVRKFAEAQLKNYGQDFEVELSDGLFAGQKLIPVNTAGCYVPGGRYAHIASAVMSVTTAKVAGVKNVIACSPPKEGVGAHPTIIYTADLCGADVILNLGGVPAIAAMTNGLFNNPPADIIVGPGNQFVAEAKRILFGKVGIDLFAGPTEIGIIADAKADPEIVAVDLVGQAEHGYNSPCWLYTTSKELAEKVMKRVPELIAELPEVPRTNADAAWRDYGEVILCDTDEEMATISDEYAPEHLEVQTENLEWFHKRLTNYGSLFIGEETTVAYGDKCSGTNHILPTKGAGRYTGGLFVGKFVKTLSFQRMTKESTELVGAAAARISRYEGMEAHARTGDVRLKKYGYSS</sequence>
<comment type="cofactor">
    <cofactor evidence="1">
        <name>Zn(2+)</name>
        <dbReference type="ChEBI" id="CHEBI:29105"/>
    </cofactor>
    <text evidence="1">Binds 1 zinc ion per subunit.</text>
</comment>
<comment type="similarity">
    <text evidence="2">Belongs to the histidinol dehydrogenase family.</text>
</comment>
<gene>
    <name type="ordered locus">SAR11_0801</name>
</gene>
<evidence type="ECO:0000250" key="1">
    <source>
        <dbReference type="UniProtKB" id="P06988"/>
    </source>
</evidence>
<evidence type="ECO:0000305" key="2"/>
<accession>Q4FMH0</accession>
<keyword id="KW-0479">Metal-binding</keyword>
<keyword id="KW-0560">Oxidoreductase</keyword>
<keyword id="KW-1185">Reference proteome</keyword>
<keyword id="KW-0862">Zinc</keyword>
<reference key="1">
    <citation type="journal article" date="2005" name="Science">
        <title>Genome streamlining in a cosmopolitan oceanic bacterium.</title>
        <authorList>
            <person name="Giovannoni S.J."/>
            <person name="Tripp H.J."/>
            <person name="Givan S."/>
            <person name="Podar M."/>
            <person name="Vergin K.L."/>
            <person name="Baptista D."/>
            <person name="Bibbs L."/>
            <person name="Eads J."/>
            <person name="Richardson T.H."/>
            <person name="Noordewier M."/>
            <person name="Rappe M.S."/>
            <person name="Short J.M."/>
            <person name="Carrington J.C."/>
            <person name="Mathur E.J."/>
        </authorList>
    </citation>
    <scope>NUCLEOTIDE SEQUENCE [LARGE SCALE GENOMIC DNA]</scope>
    <source>
        <strain>HTCC1062</strain>
    </source>
</reference>
<proteinExistence type="inferred from homology"/>
<protein>
    <recommendedName>
        <fullName evidence="2">Histidinol dehydrogenase homolog</fullName>
        <ecNumber evidence="2">1.1.-.-</ecNumber>
    </recommendedName>
</protein>
<name>HISXH_PELUB</name>
<dbReference type="EC" id="1.1.-.-" evidence="2"/>
<dbReference type="EMBL" id="CP000084">
    <property type="protein sequence ID" value="AAZ21619.1"/>
    <property type="molecule type" value="Genomic_DNA"/>
</dbReference>
<dbReference type="SMR" id="Q4FMH0"/>
<dbReference type="STRING" id="335992.SAR11_0801"/>
<dbReference type="GeneID" id="66295302"/>
<dbReference type="KEGG" id="pub:SAR11_0801"/>
<dbReference type="eggNOG" id="COG0141">
    <property type="taxonomic scope" value="Bacteria"/>
</dbReference>
<dbReference type="HOGENOM" id="CLU_006732_3_3_5"/>
<dbReference type="OrthoDB" id="9805269at2"/>
<dbReference type="Proteomes" id="UP000002528">
    <property type="component" value="Chromosome"/>
</dbReference>
<dbReference type="GO" id="GO:0005829">
    <property type="term" value="C:cytosol"/>
    <property type="evidence" value="ECO:0007669"/>
    <property type="project" value="TreeGrafter"/>
</dbReference>
<dbReference type="GO" id="GO:0004399">
    <property type="term" value="F:histidinol dehydrogenase activity"/>
    <property type="evidence" value="ECO:0007669"/>
    <property type="project" value="InterPro"/>
</dbReference>
<dbReference type="GO" id="GO:0046872">
    <property type="term" value="F:metal ion binding"/>
    <property type="evidence" value="ECO:0007669"/>
    <property type="project" value="UniProtKB-KW"/>
</dbReference>
<dbReference type="GO" id="GO:0051287">
    <property type="term" value="F:NAD binding"/>
    <property type="evidence" value="ECO:0007669"/>
    <property type="project" value="InterPro"/>
</dbReference>
<dbReference type="GO" id="GO:0000105">
    <property type="term" value="P:L-histidine biosynthetic process"/>
    <property type="evidence" value="ECO:0007669"/>
    <property type="project" value="InterPro"/>
</dbReference>
<dbReference type="CDD" id="cd06572">
    <property type="entry name" value="Histidinol_dh"/>
    <property type="match status" value="1"/>
</dbReference>
<dbReference type="FunFam" id="3.40.50.1980:FF:000001">
    <property type="entry name" value="Histidinol dehydrogenase"/>
    <property type="match status" value="1"/>
</dbReference>
<dbReference type="Gene3D" id="1.20.5.1300">
    <property type="match status" value="1"/>
</dbReference>
<dbReference type="Gene3D" id="3.40.50.1980">
    <property type="entry name" value="Nitrogenase molybdenum iron protein domain"/>
    <property type="match status" value="2"/>
</dbReference>
<dbReference type="InterPro" id="IPR016161">
    <property type="entry name" value="Ald_DH/histidinol_DH"/>
</dbReference>
<dbReference type="InterPro" id="IPR001692">
    <property type="entry name" value="Histidinol_DH_CS"/>
</dbReference>
<dbReference type="InterPro" id="IPR022695">
    <property type="entry name" value="Histidinol_DH_monofunct"/>
</dbReference>
<dbReference type="InterPro" id="IPR012131">
    <property type="entry name" value="Hstdl_DH"/>
</dbReference>
<dbReference type="NCBIfam" id="TIGR00069">
    <property type="entry name" value="hisD"/>
    <property type="match status" value="1"/>
</dbReference>
<dbReference type="PANTHER" id="PTHR21256:SF14">
    <property type="entry name" value="HISTIDINOL DEHYDROGENASE"/>
    <property type="match status" value="1"/>
</dbReference>
<dbReference type="PANTHER" id="PTHR21256">
    <property type="entry name" value="HISTIDINOL DEHYDROGENASE HDH"/>
    <property type="match status" value="1"/>
</dbReference>
<dbReference type="Pfam" id="PF00815">
    <property type="entry name" value="Histidinol_dh"/>
    <property type="match status" value="1"/>
</dbReference>
<dbReference type="PIRSF" id="PIRSF000099">
    <property type="entry name" value="Histidinol_dh"/>
    <property type="match status" value="1"/>
</dbReference>
<dbReference type="PRINTS" id="PR00083">
    <property type="entry name" value="HOLDHDRGNASE"/>
</dbReference>
<dbReference type="SUPFAM" id="SSF53720">
    <property type="entry name" value="ALDH-like"/>
    <property type="match status" value="1"/>
</dbReference>
<dbReference type="PROSITE" id="PS00611">
    <property type="entry name" value="HISOL_DEHYDROGENASE"/>
    <property type="match status" value="1"/>
</dbReference>